<accession>A6W3H7</accession>
<sequence length="239" mass="25837">MRPSGREADQLRPLKITRNFTKHAEGSVLIECGDTKVICTATVVSGVPRFLKGKGQGWITAEYGMLPRSTHSRMDREAARGKQGGRTVEIQRLIGRSLRAAVDLKKLGENTITIDCDVIQADGGTRTASITGGFVALADAMRVLVENKKVKENPIVSQIAAISVGVYKGVPVLDLDYPEDSNAETDMNVIMNDKGGFIEIQGTAEGEAFSDEHMMGMLAVARKGIAEIMEAQRAALFDK</sequence>
<name>RNPH_MARMS</name>
<comment type="function">
    <text evidence="1">Phosphorolytic 3'-5' exoribonuclease that plays an important role in tRNA 3'-end maturation. Removes nucleotide residues following the 3'-CCA terminus of tRNAs; can also add nucleotides to the ends of RNA molecules by using nucleoside diphosphates as substrates, but this may not be physiologically important. Probably plays a role in initiation of 16S rRNA degradation (leading to ribosome degradation) during starvation.</text>
</comment>
<comment type="catalytic activity">
    <reaction evidence="1">
        <text>tRNA(n+1) + phosphate = tRNA(n) + a ribonucleoside 5'-diphosphate</text>
        <dbReference type="Rhea" id="RHEA:10628"/>
        <dbReference type="Rhea" id="RHEA-COMP:17343"/>
        <dbReference type="Rhea" id="RHEA-COMP:17344"/>
        <dbReference type="ChEBI" id="CHEBI:43474"/>
        <dbReference type="ChEBI" id="CHEBI:57930"/>
        <dbReference type="ChEBI" id="CHEBI:173114"/>
        <dbReference type="EC" id="2.7.7.56"/>
    </reaction>
</comment>
<comment type="subunit">
    <text evidence="1">Homohexameric ring arranged as a trimer of dimers.</text>
</comment>
<comment type="similarity">
    <text evidence="1">Belongs to the RNase PH family.</text>
</comment>
<evidence type="ECO:0000255" key="1">
    <source>
        <dbReference type="HAMAP-Rule" id="MF_00564"/>
    </source>
</evidence>
<keyword id="KW-0548">Nucleotidyltransferase</keyword>
<keyword id="KW-0694">RNA-binding</keyword>
<keyword id="KW-0698">rRNA processing</keyword>
<keyword id="KW-0808">Transferase</keyword>
<keyword id="KW-0819">tRNA processing</keyword>
<keyword id="KW-0820">tRNA-binding</keyword>
<reference key="1">
    <citation type="submission" date="2007-06" db="EMBL/GenBank/DDBJ databases">
        <title>Complete sequence of Marinomonas sp. MWYL1.</title>
        <authorList>
            <consortium name="US DOE Joint Genome Institute"/>
            <person name="Copeland A."/>
            <person name="Lucas S."/>
            <person name="Lapidus A."/>
            <person name="Barry K."/>
            <person name="Glavina del Rio T."/>
            <person name="Dalin E."/>
            <person name="Tice H."/>
            <person name="Pitluck S."/>
            <person name="Kiss H."/>
            <person name="Brettin T."/>
            <person name="Bruce D."/>
            <person name="Detter J.C."/>
            <person name="Han C."/>
            <person name="Schmutz J."/>
            <person name="Larimer F."/>
            <person name="Land M."/>
            <person name="Hauser L."/>
            <person name="Kyrpides N."/>
            <person name="Kim E."/>
            <person name="Johnston A.W.B."/>
            <person name="Todd J.D."/>
            <person name="Rogers R."/>
            <person name="Wexler M."/>
            <person name="Bond P.L."/>
            <person name="Li Y."/>
            <person name="Richardson P."/>
        </authorList>
    </citation>
    <scope>NUCLEOTIDE SEQUENCE [LARGE SCALE GENOMIC DNA]</scope>
    <source>
        <strain>MWYL1</strain>
    </source>
</reference>
<proteinExistence type="inferred from homology"/>
<gene>
    <name evidence="1" type="primary">rph</name>
    <name type="ordered locus">Mmwyl1_4361</name>
</gene>
<protein>
    <recommendedName>
        <fullName evidence="1">Ribonuclease PH</fullName>
        <shortName evidence="1">RNase PH</shortName>
        <ecNumber evidence="1">2.7.7.56</ecNumber>
    </recommendedName>
    <alternativeName>
        <fullName evidence="1">tRNA nucleotidyltransferase</fullName>
    </alternativeName>
</protein>
<dbReference type="EC" id="2.7.7.56" evidence="1"/>
<dbReference type="EMBL" id="CP000749">
    <property type="protein sequence ID" value="ABR73256.1"/>
    <property type="molecule type" value="Genomic_DNA"/>
</dbReference>
<dbReference type="SMR" id="A6W3H7"/>
<dbReference type="STRING" id="400668.Mmwyl1_4361"/>
<dbReference type="KEGG" id="mmw:Mmwyl1_4361"/>
<dbReference type="eggNOG" id="COG0689">
    <property type="taxonomic scope" value="Bacteria"/>
</dbReference>
<dbReference type="HOGENOM" id="CLU_050858_0_0_6"/>
<dbReference type="OrthoDB" id="9802265at2"/>
<dbReference type="GO" id="GO:0000175">
    <property type="term" value="F:3'-5'-RNA exonuclease activity"/>
    <property type="evidence" value="ECO:0007669"/>
    <property type="project" value="UniProtKB-UniRule"/>
</dbReference>
<dbReference type="GO" id="GO:0000049">
    <property type="term" value="F:tRNA binding"/>
    <property type="evidence" value="ECO:0007669"/>
    <property type="project" value="UniProtKB-UniRule"/>
</dbReference>
<dbReference type="GO" id="GO:0009022">
    <property type="term" value="F:tRNA nucleotidyltransferase activity"/>
    <property type="evidence" value="ECO:0007669"/>
    <property type="project" value="UniProtKB-UniRule"/>
</dbReference>
<dbReference type="GO" id="GO:0016075">
    <property type="term" value="P:rRNA catabolic process"/>
    <property type="evidence" value="ECO:0007669"/>
    <property type="project" value="UniProtKB-UniRule"/>
</dbReference>
<dbReference type="GO" id="GO:0006364">
    <property type="term" value="P:rRNA processing"/>
    <property type="evidence" value="ECO:0007669"/>
    <property type="project" value="UniProtKB-KW"/>
</dbReference>
<dbReference type="GO" id="GO:0008033">
    <property type="term" value="P:tRNA processing"/>
    <property type="evidence" value="ECO:0007669"/>
    <property type="project" value="UniProtKB-UniRule"/>
</dbReference>
<dbReference type="CDD" id="cd11362">
    <property type="entry name" value="RNase_PH_bact"/>
    <property type="match status" value="1"/>
</dbReference>
<dbReference type="FunFam" id="3.30.230.70:FF:000003">
    <property type="entry name" value="Ribonuclease PH"/>
    <property type="match status" value="1"/>
</dbReference>
<dbReference type="Gene3D" id="3.30.230.70">
    <property type="entry name" value="GHMP Kinase, N-terminal domain"/>
    <property type="match status" value="1"/>
</dbReference>
<dbReference type="HAMAP" id="MF_00564">
    <property type="entry name" value="RNase_PH"/>
    <property type="match status" value="1"/>
</dbReference>
<dbReference type="InterPro" id="IPR001247">
    <property type="entry name" value="ExoRNase_PH_dom1"/>
</dbReference>
<dbReference type="InterPro" id="IPR015847">
    <property type="entry name" value="ExoRNase_PH_dom2"/>
</dbReference>
<dbReference type="InterPro" id="IPR036345">
    <property type="entry name" value="ExoRNase_PH_dom2_sf"/>
</dbReference>
<dbReference type="InterPro" id="IPR027408">
    <property type="entry name" value="PNPase/RNase_PH_dom_sf"/>
</dbReference>
<dbReference type="InterPro" id="IPR020568">
    <property type="entry name" value="Ribosomal_Su5_D2-typ_SF"/>
</dbReference>
<dbReference type="InterPro" id="IPR050080">
    <property type="entry name" value="RNase_PH"/>
</dbReference>
<dbReference type="InterPro" id="IPR002381">
    <property type="entry name" value="RNase_PH_bac-type"/>
</dbReference>
<dbReference type="InterPro" id="IPR018336">
    <property type="entry name" value="RNase_PH_CS"/>
</dbReference>
<dbReference type="NCBIfam" id="TIGR01966">
    <property type="entry name" value="RNasePH"/>
    <property type="match status" value="1"/>
</dbReference>
<dbReference type="PANTHER" id="PTHR11953">
    <property type="entry name" value="EXOSOME COMPLEX COMPONENT"/>
    <property type="match status" value="1"/>
</dbReference>
<dbReference type="PANTHER" id="PTHR11953:SF0">
    <property type="entry name" value="EXOSOME COMPLEX COMPONENT RRP41"/>
    <property type="match status" value="1"/>
</dbReference>
<dbReference type="Pfam" id="PF01138">
    <property type="entry name" value="RNase_PH"/>
    <property type="match status" value="1"/>
</dbReference>
<dbReference type="Pfam" id="PF03725">
    <property type="entry name" value="RNase_PH_C"/>
    <property type="match status" value="1"/>
</dbReference>
<dbReference type="SUPFAM" id="SSF55666">
    <property type="entry name" value="Ribonuclease PH domain 2-like"/>
    <property type="match status" value="1"/>
</dbReference>
<dbReference type="SUPFAM" id="SSF54211">
    <property type="entry name" value="Ribosomal protein S5 domain 2-like"/>
    <property type="match status" value="1"/>
</dbReference>
<dbReference type="PROSITE" id="PS01277">
    <property type="entry name" value="RIBONUCLEASE_PH"/>
    <property type="match status" value="1"/>
</dbReference>
<feature type="chain" id="PRO_1000082295" description="Ribonuclease PH">
    <location>
        <begin position="1"/>
        <end position="239"/>
    </location>
</feature>
<feature type="binding site" evidence="1">
    <location>
        <position position="86"/>
    </location>
    <ligand>
        <name>phosphate</name>
        <dbReference type="ChEBI" id="CHEBI:43474"/>
        <note>substrate</note>
    </ligand>
</feature>
<feature type="binding site" evidence="1">
    <location>
        <begin position="124"/>
        <end position="126"/>
    </location>
    <ligand>
        <name>phosphate</name>
        <dbReference type="ChEBI" id="CHEBI:43474"/>
        <note>substrate</note>
    </ligand>
</feature>
<organism>
    <name type="scientific">Marinomonas sp. (strain MWYL1)</name>
    <dbReference type="NCBI Taxonomy" id="400668"/>
    <lineage>
        <taxon>Bacteria</taxon>
        <taxon>Pseudomonadati</taxon>
        <taxon>Pseudomonadota</taxon>
        <taxon>Gammaproteobacteria</taxon>
        <taxon>Oceanospirillales</taxon>
        <taxon>Oceanospirillaceae</taxon>
        <taxon>Marinomonas</taxon>
    </lineage>
</organism>